<feature type="chain" id="PRO_1000051515" description="4-hydroxythreonine-4-phosphate dehydrogenase">
    <location>
        <begin position="1"/>
        <end position="329"/>
    </location>
</feature>
<feature type="binding site" evidence="1">
    <location>
        <position position="136"/>
    </location>
    <ligand>
        <name>substrate</name>
    </ligand>
</feature>
<feature type="binding site" evidence="1">
    <location>
        <position position="137"/>
    </location>
    <ligand>
        <name>substrate</name>
    </ligand>
</feature>
<feature type="binding site" evidence="1">
    <location>
        <position position="166"/>
    </location>
    <ligand>
        <name>a divalent metal cation</name>
        <dbReference type="ChEBI" id="CHEBI:60240"/>
        <note>ligand shared between dimeric partners</note>
    </ligand>
</feature>
<feature type="binding site" evidence="1">
    <location>
        <position position="211"/>
    </location>
    <ligand>
        <name>a divalent metal cation</name>
        <dbReference type="ChEBI" id="CHEBI:60240"/>
        <note>ligand shared between dimeric partners</note>
    </ligand>
</feature>
<feature type="binding site" evidence="1">
    <location>
        <position position="266"/>
    </location>
    <ligand>
        <name>a divalent metal cation</name>
        <dbReference type="ChEBI" id="CHEBI:60240"/>
        <note>ligand shared between dimeric partners</note>
    </ligand>
</feature>
<feature type="binding site" evidence="1">
    <location>
        <position position="274"/>
    </location>
    <ligand>
        <name>substrate</name>
    </ligand>
</feature>
<feature type="binding site" evidence="1">
    <location>
        <position position="283"/>
    </location>
    <ligand>
        <name>substrate</name>
    </ligand>
</feature>
<feature type="binding site" evidence="1">
    <location>
        <position position="292"/>
    </location>
    <ligand>
        <name>substrate</name>
    </ligand>
</feature>
<dbReference type="EC" id="1.1.1.262" evidence="1"/>
<dbReference type="EMBL" id="CP000034">
    <property type="protein sequence ID" value="ABB60315.1"/>
    <property type="molecule type" value="Genomic_DNA"/>
</dbReference>
<dbReference type="RefSeq" id="WP_000241239.1">
    <property type="nucleotide sequence ID" value="NC_007606.1"/>
</dbReference>
<dbReference type="RefSeq" id="YP_401804.1">
    <property type="nucleotide sequence ID" value="NC_007606.1"/>
</dbReference>
<dbReference type="SMR" id="Q32K42"/>
<dbReference type="STRING" id="300267.SDY_0077"/>
<dbReference type="EnsemblBacteria" id="ABB60315">
    <property type="protein sequence ID" value="ABB60315"/>
    <property type="gene ID" value="SDY_0077"/>
</dbReference>
<dbReference type="KEGG" id="sdy:SDY_0077"/>
<dbReference type="PATRIC" id="fig|300267.13.peg.87"/>
<dbReference type="HOGENOM" id="CLU_040168_2_0_6"/>
<dbReference type="UniPathway" id="UPA00244">
    <property type="reaction ID" value="UER00312"/>
</dbReference>
<dbReference type="Proteomes" id="UP000002716">
    <property type="component" value="Chromosome"/>
</dbReference>
<dbReference type="GO" id="GO:0005737">
    <property type="term" value="C:cytoplasm"/>
    <property type="evidence" value="ECO:0007669"/>
    <property type="project" value="UniProtKB-SubCell"/>
</dbReference>
<dbReference type="GO" id="GO:0050570">
    <property type="term" value="F:4-hydroxythreonine-4-phosphate dehydrogenase activity"/>
    <property type="evidence" value="ECO:0007669"/>
    <property type="project" value="UniProtKB-UniRule"/>
</dbReference>
<dbReference type="GO" id="GO:0050897">
    <property type="term" value="F:cobalt ion binding"/>
    <property type="evidence" value="ECO:0007669"/>
    <property type="project" value="UniProtKB-UniRule"/>
</dbReference>
<dbReference type="GO" id="GO:0000287">
    <property type="term" value="F:magnesium ion binding"/>
    <property type="evidence" value="ECO:0007669"/>
    <property type="project" value="UniProtKB-UniRule"/>
</dbReference>
<dbReference type="GO" id="GO:0051287">
    <property type="term" value="F:NAD binding"/>
    <property type="evidence" value="ECO:0007669"/>
    <property type="project" value="InterPro"/>
</dbReference>
<dbReference type="GO" id="GO:0008270">
    <property type="term" value="F:zinc ion binding"/>
    <property type="evidence" value="ECO:0007669"/>
    <property type="project" value="UniProtKB-UniRule"/>
</dbReference>
<dbReference type="GO" id="GO:0042823">
    <property type="term" value="P:pyridoxal phosphate biosynthetic process"/>
    <property type="evidence" value="ECO:0007669"/>
    <property type="project" value="UniProtKB-UniRule"/>
</dbReference>
<dbReference type="GO" id="GO:0008615">
    <property type="term" value="P:pyridoxine biosynthetic process"/>
    <property type="evidence" value="ECO:0007669"/>
    <property type="project" value="UniProtKB-UniRule"/>
</dbReference>
<dbReference type="FunFam" id="3.40.718.10:FF:000010">
    <property type="entry name" value="4-hydroxythreonine-4-phosphate dehydrogenase"/>
    <property type="match status" value="1"/>
</dbReference>
<dbReference type="Gene3D" id="3.40.718.10">
    <property type="entry name" value="Isopropylmalate Dehydrogenase"/>
    <property type="match status" value="1"/>
</dbReference>
<dbReference type="HAMAP" id="MF_00536">
    <property type="entry name" value="PdxA"/>
    <property type="match status" value="1"/>
</dbReference>
<dbReference type="InterPro" id="IPR037510">
    <property type="entry name" value="PdxA"/>
</dbReference>
<dbReference type="InterPro" id="IPR005255">
    <property type="entry name" value="PdxA_fam"/>
</dbReference>
<dbReference type="NCBIfam" id="TIGR00557">
    <property type="entry name" value="pdxA"/>
    <property type="match status" value="1"/>
</dbReference>
<dbReference type="PANTHER" id="PTHR30004">
    <property type="entry name" value="4-HYDROXYTHREONINE-4-PHOSPHATE DEHYDROGENASE"/>
    <property type="match status" value="1"/>
</dbReference>
<dbReference type="PANTHER" id="PTHR30004:SF5">
    <property type="entry name" value="4-HYDROXYTHREONINE-4-PHOSPHATE DEHYDROGENASE"/>
    <property type="match status" value="1"/>
</dbReference>
<dbReference type="Pfam" id="PF04166">
    <property type="entry name" value="PdxA"/>
    <property type="match status" value="1"/>
</dbReference>
<dbReference type="SUPFAM" id="SSF53659">
    <property type="entry name" value="Isocitrate/Isopropylmalate dehydrogenase-like"/>
    <property type="match status" value="1"/>
</dbReference>
<reference key="1">
    <citation type="journal article" date="2005" name="Nucleic Acids Res.">
        <title>Genome dynamics and diversity of Shigella species, the etiologic agents of bacillary dysentery.</title>
        <authorList>
            <person name="Yang F."/>
            <person name="Yang J."/>
            <person name="Zhang X."/>
            <person name="Chen L."/>
            <person name="Jiang Y."/>
            <person name="Yan Y."/>
            <person name="Tang X."/>
            <person name="Wang J."/>
            <person name="Xiong Z."/>
            <person name="Dong J."/>
            <person name="Xue Y."/>
            <person name="Zhu Y."/>
            <person name="Xu X."/>
            <person name="Sun L."/>
            <person name="Chen S."/>
            <person name="Nie H."/>
            <person name="Peng J."/>
            <person name="Xu J."/>
            <person name="Wang Y."/>
            <person name="Yuan Z."/>
            <person name="Wen Y."/>
            <person name="Yao Z."/>
            <person name="Shen Y."/>
            <person name="Qiang B."/>
            <person name="Hou Y."/>
            <person name="Yu J."/>
            <person name="Jin Q."/>
        </authorList>
    </citation>
    <scope>NUCLEOTIDE SEQUENCE [LARGE SCALE GENOMIC DNA]</scope>
    <source>
        <strain>Sd197</strain>
    </source>
</reference>
<organism>
    <name type="scientific">Shigella dysenteriae serotype 1 (strain Sd197)</name>
    <dbReference type="NCBI Taxonomy" id="300267"/>
    <lineage>
        <taxon>Bacteria</taxon>
        <taxon>Pseudomonadati</taxon>
        <taxon>Pseudomonadota</taxon>
        <taxon>Gammaproteobacteria</taxon>
        <taxon>Enterobacterales</taxon>
        <taxon>Enterobacteriaceae</taxon>
        <taxon>Shigella</taxon>
    </lineage>
</organism>
<gene>
    <name evidence="1" type="primary">pdxA</name>
    <name type="ordered locus">SDY_0077</name>
</gene>
<name>PDXA_SHIDS</name>
<accession>Q32K42</accession>
<protein>
    <recommendedName>
        <fullName evidence="1">4-hydroxythreonine-4-phosphate dehydrogenase</fullName>
        <ecNumber evidence="1">1.1.1.262</ecNumber>
    </recommendedName>
    <alternativeName>
        <fullName evidence="1">4-(phosphohydroxy)-L-threonine dehydrogenase</fullName>
    </alternativeName>
</protein>
<evidence type="ECO:0000255" key="1">
    <source>
        <dbReference type="HAMAP-Rule" id="MF_00536"/>
    </source>
</evidence>
<comment type="function">
    <text evidence="1">Catalyzes the NAD(P)-dependent oxidation of 4-(phosphooxy)-L-threonine (HTP) into 2-amino-3-oxo-4-(phosphooxy)butyric acid which spontaneously decarboxylates to form 3-amino-2-oxopropyl phosphate (AHAP).</text>
</comment>
<comment type="catalytic activity">
    <reaction evidence="1">
        <text>4-(phosphooxy)-L-threonine + NAD(+) = 3-amino-2-oxopropyl phosphate + CO2 + NADH</text>
        <dbReference type="Rhea" id="RHEA:32275"/>
        <dbReference type="ChEBI" id="CHEBI:16526"/>
        <dbReference type="ChEBI" id="CHEBI:57279"/>
        <dbReference type="ChEBI" id="CHEBI:57540"/>
        <dbReference type="ChEBI" id="CHEBI:57945"/>
        <dbReference type="ChEBI" id="CHEBI:58452"/>
        <dbReference type="EC" id="1.1.1.262"/>
    </reaction>
</comment>
<comment type="cofactor">
    <cofactor evidence="1">
        <name>Zn(2+)</name>
        <dbReference type="ChEBI" id="CHEBI:29105"/>
    </cofactor>
    <cofactor evidence="1">
        <name>Mg(2+)</name>
        <dbReference type="ChEBI" id="CHEBI:18420"/>
    </cofactor>
    <cofactor evidence="1">
        <name>Co(2+)</name>
        <dbReference type="ChEBI" id="CHEBI:48828"/>
    </cofactor>
    <text evidence="1">Binds 1 divalent metal cation per subunit. Can use ions such as Zn(2+), Mg(2+) or Co(2+).</text>
</comment>
<comment type="pathway">
    <text evidence="1">Cofactor biosynthesis; pyridoxine 5'-phosphate biosynthesis; pyridoxine 5'-phosphate from D-erythrose 4-phosphate: step 4/5.</text>
</comment>
<comment type="subunit">
    <text evidence="1">Homodimer.</text>
</comment>
<comment type="subcellular location">
    <subcellularLocation>
        <location evidence="1">Cytoplasm</location>
    </subcellularLocation>
</comment>
<comment type="miscellaneous">
    <text evidence="1">The active site is located at the dimer interface.</text>
</comment>
<comment type="similarity">
    <text evidence="1">Belongs to the PdxA family.</text>
</comment>
<keyword id="KW-0170">Cobalt</keyword>
<keyword id="KW-0963">Cytoplasm</keyword>
<keyword id="KW-0460">Magnesium</keyword>
<keyword id="KW-0479">Metal-binding</keyword>
<keyword id="KW-0520">NAD</keyword>
<keyword id="KW-0521">NADP</keyword>
<keyword id="KW-0560">Oxidoreductase</keyword>
<keyword id="KW-0664">Pyridoxine biosynthesis</keyword>
<keyword id="KW-1185">Reference proteome</keyword>
<keyword id="KW-0862">Zinc</keyword>
<proteinExistence type="inferred from homology"/>
<sequence length="329" mass="35120">MVKTQRVVITPGEPAGIGPDLVVQLAQREWPVELVVCADATLLTDRAAMLGLPLTLRPYSPNSPAQPQTAGILTLLPVALRESVTAGQLAVENGHYVVETLARACDGCLNGEFAALITGPVHKGVINDAGIPFTGHTEFFEERSRAKKVVMMLATEELRVALATTHLPLRDIADAITPALLHEVIAILHHDLRTKFGIAEPRILVCGLNPHAGEGGHMGTEEIGTIIPVLDELRAQGMKLSGPLPADTLFQPKYLDNADAVLAMYHDQGLPVLKYQGFGRGVNITLGLPFIRTSVDHGTALELAGRGEADVGSFITALNLAIKMIVNTQ</sequence>